<reference key="1">
    <citation type="journal article" date="1997" name="Nature">
        <title>The nucleotide sequence of Saccharomyces cerevisiae chromosome XVI.</title>
        <authorList>
            <person name="Bussey H."/>
            <person name="Storms R.K."/>
            <person name="Ahmed A."/>
            <person name="Albermann K."/>
            <person name="Allen E."/>
            <person name="Ansorge W."/>
            <person name="Araujo R."/>
            <person name="Aparicio A."/>
            <person name="Barrell B.G."/>
            <person name="Badcock K."/>
            <person name="Benes V."/>
            <person name="Botstein D."/>
            <person name="Bowman S."/>
            <person name="Brueckner M."/>
            <person name="Carpenter J."/>
            <person name="Cherry J.M."/>
            <person name="Chung E."/>
            <person name="Churcher C.M."/>
            <person name="Coster F."/>
            <person name="Davis K."/>
            <person name="Davis R.W."/>
            <person name="Dietrich F.S."/>
            <person name="Delius H."/>
            <person name="DiPaolo T."/>
            <person name="Dubois E."/>
            <person name="Duesterhoeft A."/>
            <person name="Duncan M."/>
            <person name="Floeth M."/>
            <person name="Fortin N."/>
            <person name="Friesen J.D."/>
            <person name="Fritz C."/>
            <person name="Goffeau A."/>
            <person name="Hall J."/>
            <person name="Hebling U."/>
            <person name="Heumann K."/>
            <person name="Hilbert H."/>
            <person name="Hillier L.W."/>
            <person name="Hunicke-Smith S."/>
            <person name="Hyman R.W."/>
            <person name="Johnston M."/>
            <person name="Kalman S."/>
            <person name="Kleine K."/>
            <person name="Komp C."/>
            <person name="Kurdi O."/>
            <person name="Lashkari D."/>
            <person name="Lew H."/>
            <person name="Lin A."/>
            <person name="Lin D."/>
            <person name="Louis E.J."/>
            <person name="Marathe R."/>
            <person name="Messenguy F."/>
            <person name="Mewes H.-W."/>
            <person name="Mirtipati S."/>
            <person name="Moestl D."/>
            <person name="Mueller-Auer S."/>
            <person name="Namath A."/>
            <person name="Nentwich U."/>
            <person name="Oefner P."/>
            <person name="Pearson D."/>
            <person name="Petel F.X."/>
            <person name="Pohl T.M."/>
            <person name="Purnelle B."/>
            <person name="Rajandream M.A."/>
            <person name="Rechmann S."/>
            <person name="Rieger M."/>
            <person name="Riles L."/>
            <person name="Roberts D."/>
            <person name="Schaefer M."/>
            <person name="Scharfe M."/>
            <person name="Scherens B."/>
            <person name="Schramm S."/>
            <person name="Schroeder M."/>
            <person name="Sdicu A.-M."/>
            <person name="Tettelin H."/>
            <person name="Urrestarazu L.A."/>
            <person name="Ushinsky S."/>
            <person name="Vierendeels F."/>
            <person name="Vissers S."/>
            <person name="Voss H."/>
            <person name="Walsh S.V."/>
            <person name="Wambutt R."/>
            <person name="Wang Y."/>
            <person name="Wedler E."/>
            <person name="Wedler H."/>
            <person name="Winnett E."/>
            <person name="Zhong W.-W."/>
            <person name="Zollner A."/>
            <person name="Vo D.H."/>
            <person name="Hani J."/>
        </authorList>
    </citation>
    <scope>NUCLEOTIDE SEQUENCE [LARGE SCALE GENOMIC DNA]</scope>
    <source>
        <strain>ATCC 204508 / S288c</strain>
    </source>
</reference>
<reference key="2">
    <citation type="journal article" date="2014" name="G3 (Bethesda)">
        <title>The reference genome sequence of Saccharomyces cerevisiae: Then and now.</title>
        <authorList>
            <person name="Engel S.R."/>
            <person name="Dietrich F.S."/>
            <person name="Fisk D.G."/>
            <person name="Binkley G."/>
            <person name="Balakrishnan R."/>
            <person name="Costanzo M.C."/>
            <person name="Dwight S.S."/>
            <person name="Hitz B.C."/>
            <person name="Karra K."/>
            <person name="Nash R.S."/>
            <person name="Weng S."/>
            <person name="Wong E.D."/>
            <person name="Lloyd P."/>
            <person name="Skrzypek M.S."/>
            <person name="Miyasato S.R."/>
            <person name="Simison M."/>
            <person name="Cherry J.M."/>
        </authorList>
    </citation>
    <scope>GENOME REANNOTATION</scope>
    <source>
        <strain>ATCC 204508 / S288c</strain>
    </source>
</reference>
<accession>O13586</accession>
<sequence>MDFIEGEKDQRQKCDTAKQVNCEKYLQASHYGLLMLLFSCCSALRCVQNPFSWLLYKRDLRRKLKWEKTEKCAIPIRCKNERSKGKRTKSYLKGYIGCKIS</sequence>
<dbReference type="EMBL" id="U51033">
    <property type="protein sequence ID" value="AAB68147.1"/>
    <property type="molecule type" value="Genomic_DNA"/>
</dbReference>
<dbReference type="PIR" id="S70047">
    <property type="entry name" value="S70047"/>
</dbReference>
<dbReference type="IntAct" id="O13586">
    <property type="interactions" value="1"/>
</dbReference>
<dbReference type="PaxDb" id="4932-YPR092W"/>
<dbReference type="EnsemblFungi" id="YPR092W_mRNA">
    <property type="protein sequence ID" value="YPR092W"/>
    <property type="gene ID" value="YPR092W"/>
</dbReference>
<dbReference type="AGR" id="SGD:S000006296"/>
<dbReference type="SGD" id="S000006296">
    <property type="gene designation" value="YPR092W"/>
</dbReference>
<dbReference type="HOGENOM" id="CLU_2293881_0_0_1"/>
<comment type="miscellaneous">
    <text evidence="1">Partially overlaps YPR091C.</text>
</comment>
<comment type="caution">
    <text evidence="2">Product of a dubious gene prediction unlikely to encode a functional protein. Because of that it is not part of the S.cerevisiae S288c complete/reference proteome set.</text>
</comment>
<feature type="chain" id="PRO_0000299822" description="Putative uncharacterized protein YPR092W">
    <location>
        <begin position="1"/>
        <end position="101"/>
    </location>
</feature>
<protein>
    <recommendedName>
        <fullName>Putative uncharacterized protein YPR092W</fullName>
    </recommendedName>
</protein>
<proteinExistence type="uncertain"/>
<gene>
    <name type="ordered locus">YPR092W</name>
    <name type="ORF">P9513.15A</name>
</gene>
<organism>
    <name type="scientific">Saccharomyces cerevisiae (strain ATCC 204508 / S288c)</name>
    <name type="common">Baker's yeast</name>
    <dbReference type="NCBI Taxonomy" id="559292"/>
    <lineage>
        <taxon>Eukaryota</taxon>
        <taxon>Fungi</taxon>
        <taxon>Dikarya</taxon>
        <taxon>Ascomycota</taxon>
        <taxon>Saccharomycotina</taxon>
        <taxon>Saccharomycetes</taxon>
        <taxon>Saccharomycetales</taxon>
        <taxon>Saccharomycetaceae</taxon>
        <taxon>Saccharomyces</taxon>
    </lineage>
</organism>
<name>YP092_YEAST</name>
<evidence type="ECO:0000305" key="1"/>
<evidence type="ECO:0000305" key="2">
    <source>
    </source>
</evidence>